<feature type="chain" id="PRO_0000158763" description="Adenylate kinase">
    <location>
        <begin position="1"/>
        <end position="231"/>
    </location>
</feature>
<feature type="region of interest" description="NMP" evidence="1">
    <location>
        <begin position="32"/>
        <end position="61"/>
    </location>
</feature>
<feature type="region of interest" description="LID" evidence="1">
    <location>
        <begin position="124"/>
        <end position="161"/>
    </location>
</feature>
<feature type="binding site" evidence="1">
    <location>
        <begin position="12"/>
        <end position="17"/>
    </location>
    <ligand>
        <name>ATP</name>
        <dbReference type="ChEBI" id="CHEBI:30616"/>
    </ligand>
</feature>
<feature type="binding site" evidence="1">
    <location>
        <position position="33"/>
    </location>
    <ligand>
        <name>AMP</name>
        <dbReference type="ChEBI" id="CHEBI:456215"/>
    </ligand>
</feature>
<feature type="binding site" evidence="1">
    <location>
        <position position="38"/>
    </location>
    <ligand>
        <name>AMP</name>
        <dbReference type="ChEBI" id="CHEBI:456215"/>
    </ligand>
</feature>
<feature type="binding site" evidence="1">
    <location>
        <begin position="59"/>
        <end position="61"/>
    </location>
    <ligand>
        <name>AMP</name>
        <dbReference type="ChEBI" id="CHEBI:456215"/>
    </ligand>
</feature>
<feature type="binding site" evidence="1">
    <location>
        <begin position="87"/>
        <end position="90"/>
    </location>
    <ligand>
        <name>AMP</name>
        <dbReference type="ChEBI" id="CHEBI:456215"/>
    </ligand>
</feature>
<feature type="binding site" evidence="1">
    <location>
        <position position="94"/>
    </location>
    <ligand>
        <name>AMP</name>
        <dbReference type="ChEBI" id="CHEBI:456215"/>
    </ligand>
</feature>
<feature type="binding site" evidence="1">
    <location>
        <position position="125"/>
    </location>
    <ligand>
        <name>ATP</name>
        <dbReference type="ChEBI" id="CHEBI:30616"/>
    </ligand>
</feature>
<feature type="binding site" evidence="1">
    <location>
        <begin position="134"/>
        <end position="135"/>
    </location>
    <ligand>
        <name>ATP</name>
        <dbReference type="ChEBI" id="CHEBI:30616"/>
    </ligand>
</feature>
<feature type="binding site" evidence="1">
    <location>
        <position position="158"/>
    </location>
    <ligand>
        <name>AMP</name>
        <dbReference type="ChEBI" id="CHEBI:456215"/>
    </ligand>
</feature>
<feature type="binding site" evidence="1">
    <location>
        <position position="169"/>
    </location>
    <ligand>
        <name>AMP</name>
        <dbReference type="ChEBI" id="CHEBI:456215"/>
    </ligand>
</feature>
<feature type="binding site" evidence="1">
    <location>
        <position position="205"/>
    </location>
    <ligand>
        <name>ATP</name>
        <dbReference type="ChEBI" id="CHEBI:30616"/>
    </ligand>
</feature>
<proteinExistence type="inferred from homology"/>
<accession>Q83E75</accession>
<comment type="function">
    <text evidence="1">Catalyzes the reversible transfer of the terminal phosphate group between ATP and AMP. Plays an important role in cellular energy homeostasis and in adenine nucleotide metabolism.</text>
</comment>
<comment type="catalytic activity">
    <reaction evidence="1">
        <text>AMP + ATP = 2 ADP</text>
        <dbReference type="Rhea" id="RHEA:12973"/>
        <dbReference type="ChEBI" id="CHEBI:30616"/>
        <dbReference type="ChEBI" id="CHEBI:456215"/>
        <dbReference type="ChEBI" id="CHEBI:456216"/>
        <dbReference type="EC" id="2.7.4.3"/>
    </reaction>
</comment>
<comment type="pathway">
    <text evidence="1">Purine metabolism; AMP biosynthesis via salvage pathway; AMP from ADP: step 1/1.</text>
</comment>
<comment type="subunit">
    <text evidence="1">Monomer.</text>
</comment>
<comment type="subcellular location">
    <subcellularLocation>
        <location evidence="1">Cytoplasm</location>
    </subcellularLocation>
</comment>
<comment type="domain">
    <text evidence="1">Consists of three domains, a large central CORE domain and two small peripheral domains, NMPbind and LID, which undergo movements during catalysis. The LID domain closes over the site of phosphoryl transfer upon ATP binding. Assembling and dissambling the active center during each catalytic cycle provides an effective means to prevent ATP hydrolysis.</text>
</comment>
<comment type="similarity">
    <text evidence="1">Belongs to the adenylate kinase family.</text>
</comment>
<sequence length="231" mass="25866">MPLRIILLGLPGAGKGTQADFIAKHLDIPKISTGDMLRAAVKAKTPLGLEVKKIMESGGLVSDEIMIALVKERVKLPDCHKGYLLDGFPRTLAQADALNAAAIKIDLVIEIDVPEEEIIERMTGRLIHPASGRTYHRRYNPPKVADKDDVTGEPLIQRADDREETVRHRLAVYRKQTSPLSDYYAQWEKSGDPQAPKYFRISGLGSMEEVRERILQVFEAYDPRDSGNLEH</sequence>
<dbReference type="EC" id="2.7.4.3" evidence="1"/>
<dbReference type="EMBL" id="AE016828">
    <property type="protein sequence ID" value="AAO90004.1"/>
    <property type="molecule type" value="Genomic_DNA"/>
</dbReference>
<dbReference type="RefSeq" id="NP_819490.1">
    <property type="nucleotide sequence ID" value="NC_002971.4"/>
</dbReference>
<dbReference type="RefSeq" id="WP_005771364.1">
    <property type="nucleotide sequence ID" value="NZ_CDBG01000001.1"/>
</dbReference>
<dbReference type="SMR" id="Q83E75"/>
<dbReference type="STRING" id="227377.CBU_0454"/>
<dbReference type="EnsemblBacteria" id="AAO90004">
    <property type="protein sequence ID" value="AAO90004"/>
    <property type="gene ID" value="CBU_0454"/>
</dbReference>
<dbReference type="GeneID" id="1208338"/>
<dbReference type="KEGG" id="cbu:CBU_0454"/>
<dbReference type="PATRIC" id="fig|227377.7.peg.445"/>
<dbReference type="eggNOG" id="COG0563">
    <property type="taxonomic scope" value="Bacteria"/>
</dbReference>
<dbReference type="HOGENOM" id="CLU_032354_1_2_6"/>
<dbReference type="OrthoDB" id="9805030at2"/>
<dbReference type="UniPathway" id="UPA00588">
    <property type="reaction ID" value="UER00649"/>
</dbReference>
<dbReference type="Proteomes" id="UP000002671">
    <property type="component" value="Chromosome"/>
</dbReference>
<dbReference type="GO" id="GO:0005737">
    <property type="term" value="C:cytoplasm"/>
    <property type="evidence" value="ECO:0000318"/>
    <property type="project" value="GO_Central"/>
</dbReference>
<dbReference type="GO" id="GO:0005829">
    <property type="term" value="C:cytosol"/>
    <property type="evidence" value="ECO:0000318"/>
    <property type="project" value="GO_Central"/>
</dbReference>
<dbReference type="GO" id="GO:0004017">
    <property type="term" value="F:adenylate kinase activity"/>
    <property type="evidence" value="ECO:0000318"/>
    <property type="project" value="GO_Central"/>
</dbReference>
<dbReference type="GO" id="GO:0005524">
    <property type="term" value="F:ATP binding"/>
    <property type="evidence" value="ECO:0007669"/>
    <property type="project" value="UniProtKB-UniRule"/>
</dbReference>
<dbReference type="GO" id="GO:0004550">
    <property type="term" value="F:nucleoside diphosphate kinase activity"/>
    <property type="evidence" value="ECO:0000318"/>
    <property type="project" value="GO_Central"/>
</dbReference>
<dbReference type="GO" id="GO:0044209">
    <property type="term" value="P:AMP salvage"/>
    <property type="evidence" value="ECO:0007669"/>
    <property type="project" value="UniProtKB-UniRule"/>
</dbReference>
<dbReference type="GO" id="GO:0009132">
    <property type="term" value="P:nucleoside diphosphate metabolic process"/>
    <property type="evidence" value="ECO:0000318"/>
    <property type="project" value="GO_Central"/>
</dbReference>
<dbReference type="GO" id="GO:0009123">
    <property type="term" value="P:nucleoside monophosphate metabolic process"/>
    <property type="evidence" value="ECO:0000318"/>
    <property type="project" value="GO_Central"/>
</dbReference>
<dbReference type="CDD" id="cd01428">
    <property type="entry name" value="ADK"/>
    <property type="match status" value="1"/>
</dbReference>
<dbReference type="FunFam" id="3.40.50.300:FF:000106">
    <property type="entry name" value="Adenylate kinase mitochondrial"/>
    <property type="match status" value="1"/>
</dbReference>
<dbReference type="Gene3D" id="3.40.50.300">
    <property type="entry name" value="P-loop containing nucleotide triphosphate hydrolases"/>
    <property type="match status" value="1"/>
</dbReference>
<dbReference type="HAMAP" id="MF_00235">
    <property type="entry name" value="Adenylate_kinase_Adk"/>
    <property type="match status" value="1"/>
</dbReference>
<dbReference type="InterPro" id="IPR006259">
    <property type="entry name" value="Adenyl_kin_sub"/>
</dbReference>
<dbReference type="InterPro" id="IPR000850">
    <property type="entry name" value="Adenylat/UMP-CMP_kin"/>
</dbReference>
<dbReference type="InterPro" id="IPR033690">
    <property type="entry name" value="Adenylat_kinase_CS"/>
</dbReference>
<dbReference type="InterPro" id="IPR007862">
    <property type="entry name" value="Adenylate_kinase_lid-dom"/>
</dbReference>
<dbReference type="InterPro" id="IPR027417">
    <property type="entry name" value="P-loop_NTPase"/>
</dbReference>
<dbReference type="NCBIfam" id="TIGR01351">
    <property type="entry name" value="adk"/>
    <property type="match status" value="1"/>
</dbReference>
<dbReference type="NCBIfam" id="NF001379">
    <property type="entry name" value="PRK00279.1-1"/>
    <property type="match status" value="1"/>
</dbReference>
<dbReference type="NCBIfam" id="NF001380">
    <property type="entry name" value="PRK00279.1-2"/>
    <property type="match status" value="1"/>
</dbReference>
<dbReference type="NCBIfam" id="NF001381">
    <property type="entry name" value="PRK00279.1-3"/>
    <property type="match status" value="1"/>
</dbReference>
<dbReference type="NCBIfam" id="NF011100">
    <property type="entry name" value="PRK14527.1"/>
    <property type="match status" value="1"/>
</dbReference>
<dbReference type="PANTHER" id="PTHR23359">
    <property type="entry name" value="NUCLEOTIDE KINASE"/>
    <property type="match status" value="1"/>
</dbReference>
<dbReference type="Pfam" id="PF00406">
    <property type="entry name" value="ADK"/>
    <property type="match status" value="1"/>
</dbReference>
<dbReference type="Pfam" id="PF05191">
    <property type="entry name" value="ADK_lid"/>
    <property type="match status" value="1"/>
</dbReference>
<dbReference type="PRINTS" id="PR00094">
    <property type="entry name" value="ADENYLTKNASE"/>
</dbReference>
<dbReference type="SUPFAM" id="SSF52540">
    <property type="entry name" value="P-loop containing nucleoside triphosphate hydrolases"/>
    <property type="match status" value="1"/>
</dbReference>
<dbReference type="PROSITE" id="PS00113">
    <property type="entry name" value="ADENYLATE_KINASE"/>
    <property type="match status" value="1"/>
</dbReference>
<organism>
    <name type="scientific">Coxiella burnetii (strain RSA 493 / Nine Mile phase I)</name>
    <dbReference type="NCBI Taxonomy" id="227377"/>
    <lineage>
        <taxon>Bacteria</taxon>
        <taxon>Pseudomonadati</taxon>
        <taxon>Pseudomonadota</taxon>
        <taxon>Gammaproteobacteria</taxon>
        <taxon>Legionellales</taxon>
        <taxon>Coxiellaceae</taxon>
        <taxon>Coxiella</taxon>
    </lineage>
</organism>
<keyword id="KW-0067">ATP-binding</keyword>
<keyword id="KW-0963">Cytoplasm</keyword>
<keyword id="KW-0418">Kinase</keyword>
<keyword id="KW-0545">Nucleotide biosynthesis</keyword>
<keyword id="KW-0547">Nucleotide-binding</keyword>
<keyword id="KW-1185">Reference proteome</keyword>
<keyword id="KW-0808">Transferase</keyword>
<name>KAD_COXBU</name>
<reference key="1">
    <citation type="journal article" date="2003" name="Proc. Natl. Acad. Sci. U.S.A.">
        <title>Complete genome sequence of the Q-fever pathogen, Coxiella burnetii.</title>
        <authorList>
            <person name="Seshadri R."/>
            <person name="Paulsen I.T."/>
            <person name="Eisen J.A."/>
            <person name="Read T.D."/>
            <person name="Nelson K.E."/>
            <person name="Nelson W.C."/>
            <person name="Ward N.L."/>
            <person name="Tettelin H."/>
            <person name="Davidsen T.M."/>
            <person name="Beanan M.J."/>
            <person name="DeBoy R.T."/>
            <person name="Daugherty S.C."/>
            <person name="Brinkac L.M."/>
            <person name="Madupu R."/>
            <person name="Dodson R.J."/>
            <person name="Khouri H.M."/>
            <person name="Lee K.H."/>
            <person name="Carty H.A."/>
            <person name="Scanlan D."/>
            <person name="Heinzen R.A."/>
            <person name="Thompson H.A."/>
            <person name="Samuel J.E."/>
            <person name="Fraser C.M."/>
            <person name="Heidelberg J.F."/>
        </authorList>
    </citation>
    <scope>NUCLEOTIDE SEQUENCE [LARGE SCALE GENOMIC DNA]</scope>
    <source>
        <strain>RSA 493 / Nine Mile phase I</strain>
    </source>
</reference>
<gene>
    <name evidence="1" type="primary">adk</name>
    <name type="ordered locus">CBU_0454</name>
</gene>
<protein>
    <recommendedName>
        <fullName evidence="1">Adenylate kinase</fullName>
        <shortName evidence="1">AK</shortName>
        <ecNumber evidence="1">2.7.4.3</ecNumber>
    </recommendedName>
    <alternativeName>
        <fullName evidence="1">ATP-AMP transphosphorylase</fullName>
    </alternativeName>
    <alternativeName>
        <fullName evidence="1">ATP:AMP phosphotransferase</fullName>
    </alternativeName>
    <alternativeName>
        <fullName evidence="1">Adenylate monophosphate kinase</fullName>
    </alternativeName>
</protein>
<evidence type="ECO:0000255" key="1">
    <source>
        <dbReference type="HAMAP-Rule" id="MF_00235"/>
    </source>
</evidence>